<sequence>MLFRILSLNLIKIKKRRRRHLPNLLRRYQQLHVHNNRMEIFLVLLQRLHLLNLLLWPLYVLLHLLVVQYVQQHNKIQIQEQHLNKI</sequence>
<organism>
    <name type="scientific">Vaccinia virus (strain Copenhagen)</name>
    <name type="common">VACV</name>
    <dbReference type="NCBI Taxonomy" id="10249"/>
    <lineage>
        <taxon>Viruses</taxon>
        <taxon>Varidnaviria</taxon>
        <taxon>Bamfordvirae</taxon>
        <taxon>Nucleocytoviricota</taxon>
        <taxon>Pokkesviricetes</taxon>
        <taxon>Chitovirales</taxon>
        <taxon>Poxviridae</taxon>
        <taxon>Chordopoxvirinae</taxon>
        <taxon>Orthopoxvirus</taxon>
        <taxon>Vaccinia virus</taxon>
    </lineage>
</organism>
<name>YVAB_VACCC</name>
<keyword id="KW-1185">Reference proteome</keyword>
<protein>
    <recommendedName>
        <fullName>Uncharacterized 10.7 kDa protein</fullName>
    </recommendedName>
</protein>
<feature type="chain" id="PRO_0000099643" description="Uncharacterized 10.7 kDa protein">
    <location>
        <begin position="1"/>
        <end position="86"/>
    </location>
</feature>
<accession>P20511</accession>
<gene>
    <name type="ORF">A ORF B</name>
</gene>
<dbReference type="EMBL" id="M35027">
    <property type="protein sequence ID" value="AAA48121.1"/>
    <property type="molecule type" value="Genomic_DNA"/>
</dbReference>
<dbReference type="PIR" id="G42523">
    <property type="entry name" value="G42523"/>
</dbReference>
<dbReference type="SMR" id="P20511"/>
<dbReference type="Proteomes" id="UP000008269">
    <property type="component" value="Segment"/>
</dbReference>
<organismHost>
    <name type="scientific">Homo sapiens</name>
    <name type="common">Human</name>
    <dbReference type="NCBI Taxonomy" id="9606"/>
</organismHost>
<proteinExistence type="predicted"/>
<reference key="1">
    <citation type="journal article" date="1990" name="Virology">
        <title>The complete DNA sequence of vaccinia virus.</title>
        <authorList>
            <person name="Goebel S.J."/>
            <person name="Johnson G.P."/>
            <person name="Perkus M.E."/>
            <person name="Davis S.W."/>
            <person name="Winslow J.P."/>
            <person name="Paoletti E."/>
        </authorList>
    </citation>
    <scope>NUCLEOTIDE SEQUENCE [LARGE SCALE GENOMIC DNA]</scope>
</reference>
<reference key="2">
    <citation type="journal article" date="1990" name="Virology">
        <title>Appendix to 'The complete DNA sequence of vaccinia virus'.</title>
        <authorList>
            <person name="Goebel S.J."/>
            <person name="Johnson G.P."/>
            <person name="Perkus M.E."/>
            <person name="Davis S.W."/>
            <person name="Winslow J.P."/>
            <person name="Paoletti E."/>
        </authorList>
    </citation>
    <scope>COMPLETE GENOME</scope>
</reference>